<feature type="chain" id="PRO_0000383401" description="Crotonobetaine/carnitine--CoA ligase">
    <location>
        <begin position="1"/>
        <end position="517"/>
    </location>
</feature>
<accession>B7M0D4</accession>
<reference key="1">
    <citation type="journal article" date="2009" name="PLoS Genet.">
        <title>Organised genome dynamics in the Escherichia coli species results in highly diverse adaptive paths.</title>
        <authorList>
            <person name="Touchon M."/>
            <person name="Hoede C."/>
            <person name="Tenaillon O."/>
            <person name="Barbe V."/>
            <person name="Baeriswyl S."/>
            <person name="Bidet P."/>
            <person name="Bingen E."/>
            <person name="Bonacorsi S."/>
            <person name="Bouchier C."/>
            <person name="Bouvet O."/>
            <person name="Calteau A."/>
            <person name="Chiapello H."/>
            <person name="Clermont O."/>
            <person name="Cruveiller S."/>
            <person name="Danchin A."/>
            <person name="Diard M."/>
            <person name="Dossat C."/>
            <person name="Karoui M.E."/>
            <person name="Frapy E."/>
            <person name="Garry L."/>
            <person name="Ghigo J.M."/>
            <person name="Gilles A.M."/>
            <person name="Johnson J."/>
            <person name="Le Bouguenec C."/>
            <person name="Lescat M."/>
            <person name="Mangenot S."/>
            <person name="Martinez-Jehanne V."/>
            <person name="Matic I."/>
            <person name="Nassif X."/>
            <person name="Oztas S."/>
            <person name="Petit M.A."/>
            <person name="Pichon C."/>
            <person name="Rouy Z."/>
            <person name="Ruf C.S."/>
            <person name="Schneider D."/>
            <person name="Tourret J."/>
            <person name="Vacherie B."/>
            <person name="Vallenet D."/>
            <person name="Medigue C."/>
            <person name="Rocha E.P.C."/>
            <person name="Denamur E."/>
        </authorList>
    </citation>
    <scope>NUCLEOTIDE SEQUENCE [LARGE SCALE GENOMIC DNA]</scope>
    <source>
        <strain>IAI1</strain>
    </source>
</reference>
<sequence>MDIIGGQHLRQMWDDLADVYGHKTALICESSGGVVNRYSYLELNQEINRTANLFYTLGIRKGDKVALHLDNCPEFIFCWFGLAKIGAIMVPINARLLREESAWILQNSQACLLVTSAQFYPMYQQIQQEDATQLRHICLTDVALPADDGVSSFTQLKNQQPATLCYAPPLSTDDTAEILFTSGTTSRPKGVVITHYNLRFAGYYSAWQCALRDDDVYLTVMPAFHIDCQCTAAMAAFSAGATFVLVEKYSARAFWGQVQKYRATITECIPMMIRTLMVQPPSANDRQHRLREVMFYLNLSEQEKDAFCERFGVRLLTSYGMTETIVGIIGDRPGDKRRWPSIGRAGFCYEAEIRDDHNRPLPAGEIGEICIKGVPGKTIFKEYFLNPKATAKVLEADGWLHTGDTGYCDEEGFFYFVDRRCNMIKRGGENVSCVELENIIATHPKIQDIVVVGIKDSIRDEAIKAFVVVNEGETLSEEEFFRFCEQNMAKFKVPSYLEIRKDLPRNCSGKIIRKNLK</sequence>
<keyword id="KW-0436">Ligase</keyword>
<protein>
    <recommendedName>
        <fullName evidence="1">Crotonobetaine/carnitine--CoA ligase</fullName>
        <ecNumber evidence="1">6.2.1.48</ecNumber>
    </recommendedName>
</protein>
<organism>
    <name type="scientific">Escherichia coli O8 (strain IAI1)</name>
    <dbReference type="NCBI Taxonomy" id="585034"/>
    <lineage>
        <taxon>Bacteria</taxon>
        <taxon>Pseudomonadati</taxon>
        <taxon>Pseudomonadota</taxon>
        <taxon>Gammaproteobacteria</taxon>
        <taxon>Enterobacterales</taxon>
        <taxon>Enterobacteriaceae</taxon>
        <taxon>Escherichia</taxon>
    </lineage>
</organism>
<dbReference type="EC" id="6.2.1.48" evidence="1"/>
<dbReference type="EMBL" id="CU928160">
    <property type="protein sequence ID" value="CAQ96929.1"/>
    <property type="status" value="ALT_INIT"/>
    <property type="molecule type" value="Genomic_DNA"/>
</dbReference>
<dbReference type="RefSeq" id="WP_001307563.1">
    <property type="nucleotide sequence ID" value="NC_011741.1"/>
</dbReference>
<dbReference type="SMR" id="B7M0D4"/>
<dbReference type="KEGG" id="ecr:ECIAI1_0039"/>
<dbReference type="HOGENOM" id="CLU_000022_59_0_6"/>
<dbReference type="UniPathway" id="UPA00117"/>
<dbReference type="GO" id="GO:0051108">
    <property type="term" value="F:carnitine-CoA ligase activity"/>
    <property type="evidence" value="ECO:0007669"/>
    <property type="project" value="InterPro"/>
</dbReference>
<dbReference type="GO" id="GO:0051109">
    <property type="term" value="F:crotonobetaine-CoA ligase activity"/>
    <property type="evidence" value="ECO:0007669"/>
    <property type="project" value="InterPro"/>
</dbReference>
<dbReference type="GO" id="GO:0031956">
    <property type="term" value="F:medium-chain fatty acid-CoA ligase activity"/>
    <property type="evidence" value="ECO:0007669"/>
    <property type="project" value="TreeGrafter"/>
</dbReference>
<dbReference type="GO" id="GO:0009437">
    <property type="term" value="P:carnitine metabolic process"/>
    <property type="evidence" value="ECO:0007669"/>
    <property type="project" value="UniProtKB-UniRule"/>
</dbReference>
<dbReference type="GO" id="GO:0006631">
    <property type="term" value="P:fatty acid metabolic process"/>
    <property type="evidence" value="ECO:0007669"/>
    <property type="project" value="TreeGrafter"/>
</dbReference>
<dbReference type="CDD" id="cd05934">
    <property type="entry name" value="FACL_DitJ_like"/>
    <property type="match status" value="1"/>
</dbReference>
<dbReference type="FunFam" id="3.30.300.30:FF:000011">
    <property type="entry name" value="Crotonobetaine/carnitine--CoA ligase"/>
    <property type="match status" value="1"/>
</dbReference>
<dbReference type="FunFam" id="3.40.50.12780:FF:000017">
    <property type="entry name" value="Crotonobetaine/carnitine--CoA ligase"/>
    <property type="match status" value="1"/>
</dbReference>
<dbReference type="Gene3D" id="3.30.300.30">
    <property type="match status" value="1"/>
</dbReference>
<dbReference type="Gene3D" id="3.40.50.12780">
    <property type="entry name" value="N-terminal domain of ligase-like"/>
    <property type="match status" value="1"/>
</dbReference>
<dbReference type="HAMAP" id="MF_01524">
    <property type="entry name" value="CaiC"/>
    <property type="match status" value="1"/>
</dbReference>
<dbReference type="InterPro" id="IPR025110">
    <property type="entry name" value="AMP-bd_C"/>
</dbReference>
<dbReference type="InterPro" id="IPR045851">
    <property type="entry name" value="AMP-bd_C_sf"/>
</dbReference>
<dbReference type="InterPro" id="IPR020845">
    <property type="entry name" value="AMP-binding_CS"/>
</dbReference>
<dbReference type="InterPro" id="IPR000873">
    <property type="entry name" value="AMP-dep_synth/lig_dom"/>
</dbReference>
<dbReference type="InterPro" id="IPR042099">
    <property type="entry name" value="ANL_N_sf"/>
</dbReference>
<dbReference type="InterPro" id="IPR023456">
    <property type="entry name" value="CaiC"/>
</dbReference>
<dbReference type="NCBIfam" id="NF005947">
    <property type="entry name" value="PRK08008.1"/>
    <property type="match status" value="1"/>
</dbReference>
<dbReference type="PANTHER" id="PTHR43201">
    <property type="entry name" value="ACYL-COA SYNTHETASE"/>
    <property type="match status" value="1"/>
</dbReference>
<dbReference type="PANTHER" id="PTHR43201:SF5">
    <property type="entry name" value="MEDIUM-CHAIN ACYL-COA LIGASE ACSF2, MITOCHONDRIAL"/>
    <property type="match status" value="1"/>
</dbReference>
<dbReference type="Pfam" id="PF00501">
    <property type="entry name" value="AMP-binding"/>
    <property type="match status" value="1"/>
</dbReference>
<dbReference type="Pfam" id="PF13193">
    <property type="entry name" value="AMP-binding_C"/>
    <property type="match status" value="1"/>
</dbReference>
<dbReference type="SUPFAM" id="SSF56801">
    <property type="entry name" value="Acetyl-CoA synthetase-like"/>
    <property type="match status" value="1"/>
</dbReference>
<dbReference type="PROSITE" id="PS00455">
    <property type="entry name" value="AMP_BINDING"/>
    <property type="match status" value="1"/>
</dbReference>
<evidence type="ECO:0000255" key="1">
    <source>
        <dbReference type="HAMAP-Rule" id="MF_01524"/>
    </source>
</evidence>
<evidence type="ECO:0000305" key="2"/>
<proteinExistence type="inferred from homology"/>
<gene>
    <name evidence="1" type="primary">caiC</name>
    <name type="ordered locus">ECIAI1_0039</name>
</gene>
<comment type="function">
    <text evidence="1">Catalyzes the transfer of CoA to carnitine, generating the initial carnitinyl-CoA needed for the CaiB reaction cycle. Also has activity toward crotonobetaine and gamma-butyrobetaine.</text>
</comment>
<comment type="catalytic activity">
    <reaction evidence="1">
        <text>4-(trimethylamino)butanoate + ATP + CoA = 4-(trimethylamino)butanoyl-CoA + AMP + diphosphate</text>
        <dbReference type="Rhea" id="RHEA:55960"/>
        <dbReference type="ChEBI" id="CHEBI:16244"/>
        <dbReference type="ChEBI" id="CHEBI:30616"/>
        <dbReference type="ChEBI" id="CHEBI:33019"/>
        <dbReference type="ChEBI" id="CHEBI:57287"/>
        <dbReference type="ChEBI" id="CHEBI:61513"/>
        <dbReference type="ChEBI" id="CHEBI:456215"/>
        <dbReference type="EC" id="6.2.1.48"/>
    </reaction>
</comment>
<comment type="catalytic activity">
    <reaction evidence="1">
        <text>crotonobetaine + ATP + CoA = crotonobetainyl-CoA + AMP + diphosphate</text>
        <dbReference type="Rhea" id="RHEA:30079"/>
        <dbReference type="ChEBI" id="CHEBI:17237"/>
        <dbReference type="ChEBI" id="CHEBI:30616"/>
        <dbReference type="ChEBI" id="CHEBI:33019"/>
        <dbReference type="ChEBI" id="CHEBI:57287"/>
        <dbReference type="ChEBI" id="CHEBI:60933"/>
        <dbReference type="ChEBI" id="CHEBI:456215"/>
        <dbReference type="EC" id="6.2.1.48"/>
    </reaction>
</comment>
<comment type="catalytic activity">
    <reaction evidence="1">
        <text>(R)-carnitine + ATP + CoA = (R)-carnitinyl-CoA + AMP + diphosphate</text>
        <dbReference type="Rhea" id="RHEA:28514"/>
        <dbReference type="ChEBI" id="CHEBI:16347"/>
        <dbReference type="ChEBI" id="CHEBI:30616"/>
        <dbReference type="ChEBI" id="CHEBI:33019"/>
        <dbReference type="ChEBI" id="CHEBI:57287"/>
        <dbReference type="ChEBI" id="CHEBI:60932"/>
        <dbReference type="ChEBI" id="CHEBI:456215"/>
        <dbReference type="EC" id="6.2.1.48"/>
    </reaction>
</comment>
<comment type="pathway">
    <text evidence="1">Amine and polyamine metabolism; carnitine metabolism.</text>
</comment>
<comment type="similarity">
    <text evidence="1">Belongs to the ATP-dependent AMP-binding enzyme family.</text>
</comment>
<comment type="sequence caution" evidence="2">
    <conflict type="erroneous initiation">
        <sequence resource="EMBL-CDS" id="CAQ96929"/>
    </conflict>
</comment>
<name>CAIC_ECO8A</name>